<organism>
    <name type="scientific">Dictyostelium discoideum</name>
    <name type="common">Social amoeba</name>
    <dbReference type="NCBI Taxonomy" id="44689"/>
    <lineage>
        <taxon>Eukaryota</taxon>
        <taxon>Amoebozoa</taxon>
        <taxon>Evosea</taxon>
        <taxon>Eumycetozoa</taxon>
        <taxon>Dictyostelia</taxon>
        <taxon>Dictyosteliales</taxon>
        <taxon>Dictyosteliaceae</taxon>
        <taxon>Dictyostelium</taxon>
    </lineage>
</organism>
<accession>Q54DF9</accession>
<sequence>MSEENINKNEFPELKNDTFLKACRGEEVPYVPVWIMRQAGRYLPEFKSVRADVDFFSVCRTPELACKVTLQPLDRFPLDAAIIFSDILVVPQAMGIEVQMIPGKGPFFPNPIRTIEDLSRVQFPVDVNKELGYVFDALTLTRKRLEGRVPLIGFTGAPWTLMTYCIEGSGGTTMSNSKSWLYKHPAESHKFLSMLTRVCIDYLLGQIKAGAQALQIFDSWSNELSPAMFKEYCLPYLVQIGKEVKAVHPEIPLICFAKGSNFALEDLSKSGAYDVLGIDWTIEPSVAREMVADRVSLQGNLDPCVLYCGDQVIRDQTQKMLQSFGTTKRLIANLGHGMHPTHPIEGPESYVKAVHELSKQMINK</sequence>
<comment type="function">
    <text evidence="1">Catalyzes the decarboxylation of four acetate groups of uroporphyrinogen-III to yield coproporphyrinogen-III.</text>
</comment>
<comment type="catalytic activity">
    <reaction>
        <text>uroporphyrinogen III + 4 H(+) = coproporphyrinogen III + 4 CO2</text>
        <dbReference type="Rhea" id="RHEA:19865"/>
        <dbReference type="ChEBI" id="CHEBI:15378"/>
        <dbReference type="ChEBI" id="CHEBI:16526"/>
        <dbReference type="ChEBI" id="CHEBI:57308"/>
        <dbReference type="ChEBI" id="CHEBI:57309"/>
        <dbReference type="EC" id="4.1.1.37"/>
    </reaction>
</comment>
<comment type="pathway">
    <text>Porphyrin-containing compound metabolism; protoporphyrin-IX biosynthesis; coproporphyrinogen-III from 5-aminolevulinate: step 4/4.</text>
</comment>
<comment type="subunit">
    <text evidence="1">Homodimer.</text>
</comment>
<comment type="subcellular location">
    <subcellularLocation>
        <location evidence="1">Cytoplasm</location>
    </subcellularLocation>
</comment>
<comment type="similarity">
    <text evidence="2">Belongs to the uroporphyrinogen decarboxylase family.</text>
</comment>
<reference key="1">
    <citation type="journal article" date="2005" name="Nature">
        <title>The genome of the social amoeba Dictyostelium discoideum.</title>
        <authorList>
            <person name="Eichinger L."/>
            <person name="Pachebat J.A."/>
            <person name="Gloeckner G."/>
            <person name="Rajandream M.A."/>
            <person name="Sucgang R."/>
            <person name="Berriman M."/>
            <person name="Song J."/>
            <person name="Olsen R."/>
            <person name="Szafranski K."/>
            <person name="Xu Q."/>
            <person name="Tunggal B."/>
            <person name="Kummerfeld S."/>
            <person name="Madera M."/>
            <person name="Konfortov B.A."/>
            <person name="Rivero F."/>
            <person name="Bankier A.T."/>
            <person name="Lehmann R."/>
            <person name="Hamlin N."/>
            <person name="Davies R."/>
            <person name="Gaudet P."/>
            <person name="Fey P."/>
            <person name="Pilcher K."/>
            <person name="Chen G."/>
            <person name="Saunders D."/>
            <person name="Sodergren E.J."/>
            <person name="Davis P."/>
            <person name="Kerhornou A."/>
            <person name="Nie X."/>
            <person name="Hall N."/>
            <person name="Anjard C."/>
            <person name="Hemphill L."/>
            <person name="Bason N."/>
            <person name="Farbrother P."/>
            <person name="Desany B."/>
            <person name="Just E."/>
            <person name="Morio T."/>
            <person name="Rost R."/>
            <person name="Churcher C.M."/>
            <person name="Cooper J."/>
            <person name="Haydock S."/>
            <person name="van Driessche N."/>
            <person name="Cronin A."/>
            <person name="Goodhead I."/>
            <person name="Muzny D.M."/>
            <person name="Mourier T."/>
            <person name="Pain A."/>
            <person name="Lu M."/>
            <person name="Harper D."/>
            <person name="Lindsay R."/>
            <person name="Hauser H."/>
            <person name="James K.D."/>
            <person name="Quiles M."/>
            <person name="Madan Babu M."/>
            <person name="Saito T."/>
            <person name="Buchrieser C."/>
            <person name="Wardroper A."/>
            <person name="Felder M."/>
            <person name="Thangavelu M."/>
            <person name="Johnson D."/>
            <person name="Knights A."/>
            <person name="Loulseged H."/>
            <person name="Mungall K.L."/>
            <person name="Oliver K."/>
            <person name="Price C."/>
            <person name="Quail M.A."/>
            <person name="Urushihara H."/>
            <person name="Hernandez J."/>
            <person name="Rabbinowitsch E."/>
            <person name="Steffen D."/>
            <person name="Sanders M."/>
            <person name="Ma J."/>
            <person name="Kohara Y."/>
            <person name="Sharp S."/>
            <person name="Simmonds M.N."/>
            <person name="Spiegler S."/>
            <person name="Tivey A."/>
            <person name="Sugano S."/>
            <person name="White B."/>
            <person name="Walker D."/>
            <person name="Woodward J.R."/>
            <person name="Winckler T."/>
            <person name="Tanaka Y."/>
            <person name="Shaulsky G."/>
            <person name="Schleicher M."/>
            <person name="Weinstock G.M."/>
            <person name="Rosenthal A."/>
            <person name="Cox E.C."/>
            <person name="Chisholm R.L."/>
            <person name="Gibbs R.A."/>
            <person name="Loomis W.F."/>
            <person name="Platzer M."/>
            <person name="Kay R.R."/>
            <person name="Williams J.G."/>
            <person name="Dear P.H."/>
            <person name="Noegel A.A."/>
            <person name="Barrell B.G."/>
            <person name="Kuspa A."/>
        </authorList>
    </citation>
    <scope>NUCLEOTIDE SEQUENCE [LARGE SCALE GENOMIC DNA]</scope>
    <source>
        <strain>AX4</strain>
    </source>
</reference>
<reference key="2">
    <citation type="journal article" date="2006" name="Mol. Cell. Proteomics">
        <title>Proteomics fingerprinting of phagosome maturation and evidence for the role of a Galpha during uptake.</title>
        <authorList>
            <person name="Gotthardt D."/>
            <person name="Blancheteau V."/>
            <person name="Bosserhoff A."/>
            <person name="Ruppert T."/>
            <person name="Delorenzi M."/>
            <person name="Soldati T."/>
        </authorList>
    </citation>
    <scope>IDENTIFICATION BY MASS SPECTROMETRY [LARGE SCALE ANALYSIS]</scope>
    <source>
        <strain>AX2</strain>
    </source>
</reference>
<evidence type="ECO:0000250" key="1"/>
<evidence type="ECO:0000305" key="2"/>
<protein>
    <recommendedName>
        <fullName>Uroporphyrinogen decarboxylase</fullName>
        <shortName>UPD</shortName>
        <shortName>URO-D</shortName>
        <ecNumber>4.1.1.37</ecNumber>
    </recommendedName>
</protein>
<feature type="chain" id="PRO_0000327821" description="Uroporphyrinogen decarboxylase">
    <location>
        <begin position="1"/>
        <end position="364"/>
    </location>
</feature>
<feature type="binding site" evidence="1">
    <location>
        <begin position="37"/>
        <end position="41"/>
    </location>
    <ligand>
        <name>substrate</name>
    </ligand>
</feature>
<feature type="binding site" evidence="1">
    <location>
        <position position="55"/>
    </location>
    <ligand>
        <name>substrate</name>
    </ligand>
</feature>
<feature type="binding site" evidence="1">
    <location>
        <position position="85"/>
    </location>
    <ligand>
        <name>substrate</name>
    </ligand>
</feature>
<feature type="binding site" evidence="1">
    <location>
        <position position="86"/>
    </location>
    <ligand>
        <name>substrate</name>
    </ligand>
</feature>
<feature type="binding site" evidence="1">
    <location>
        <position position="164"/>
    </location>
    <ligand>
        <name>substrate</name>
    </ligand>
</feature>
<feature type="binding site" evidence="1">
    <location>
        <position position="219"/>
    </location>
    <ligand>
        <name>substrate</name>
    </ligand>
</feature>
<feature type="binding site" evidence="1">
    <location>
        <position position="336"/>
    </location>
    <ligand>
        <name>substrate</name>
    </ligand>
</feature>
<feature type="site" description="Transition state stabilizer" evidence="1">
    <location>
        <position position="86"/>
    </location>
</feature>
<proteinExistence type="evidence at protein level"/>
<name>DCUP_DICDI</name>
<keyword id="KW-0963">Cytoplasm</keyword>
<keyword id="KW-0210">Decarboxylase</keyword>
<keyword id="KW-0350">Heme biosynthesis</keyword>
<keyword id="KW-0456">Lyase</keyword>
<keyword id="KW-0627">Porphyrin biosynthesis</keyword>
<keyword id="KW-1185">Reference proteome</keyword>
<dbReference type="EC" id="4.1.1.37"/>
<dbReference type="EMBL" id="AAFI02000189">
    <property type="protein sequence ID" value="EAL61271.1"/>
    <property type="molecule type" value="Genomic_DNA"/>
</dbReference>
<dbReference type="RefSeq" id="XP_629682.1">
    <property type="nucleotide sequence ID" value="XM_629680.1"/>
</dbReference>
<dbReference type="SMR" id="Q54DF9"/>
<dbReference type="FunCoup" id="Q54DF9">
    <property type="interactions" value="598"/>
</dbReference>
<dbReference type="STRING" id="44689.Q54DF9"/>
<dbReference type="PaxDb" id="44689-DDB0231418"/>
<dbReference type="EnsemblProtists" id="EAL61271">
    <property type="protein sequence ID" value="EAL61271"/>
    <property type="gene ID" value="DDB_G0292294"/>
</dbReference>
<dbReference type="GeneID" id="8628598"/>
<dbReference type="KEGG" id="ddi:DDB_G0292294"/>
<dbReference type="dictyBase" id="DDB_G0292294">
    <property type="gene designation" value="hemE"/>
</dbReference>
<dbReference type="VEuPathDB" id="AmoebaDB:DDB_G0292294"/>
<dbReference type="eggNOG" id="KOG2872">
    <property type="taxonomic scope" value="Eukaryota"/>
</dbReference>
<dbReference type="HOGENOM" id="CLU_040933_0_0_1"/>
<dbReference type="InParanoid" id="Q54DF9"/>
<dbReference type="OMA" id="LWLMRQA"/>
<dbReference type="PhylomeDB" id="Q54DF9"/>
<dbReference type="Reactome" id="R-DDI-189451">
    <property type="pathway name" value="Heme biosynthesis"/>
</dbReference>
<dbReference type="UniPathway" id="UPA00251">
    <property type="reaction ID" value="UER00321"/>
</dbReference>
<dbReference type="PRO" id="PR:Q54DF9"/>
<dbReference type="Proteomes" id="UP000002195">
    <property type="component" value="Chromosome 6"/>
</dbReference>
<dbReference type="GO" id="GO:0005829">
    <property type="term" value="C:cytosol"/>
    <property type="evidence" value="ECO:0000318"/>
    <property type="project" value="GO_Central"/>
</dbReference>
<dbReference type="GO" id="GO:0045335">
    <property type="term" value="C:phagocytic vesicle"/>
    <property type="evidence" value="ECO:0007005"/>
    <property type="project" value="dictyBase"/>
</dbReference>
<dbReference type="GO" id="GO:0004853">
    <property type="term" value="F:uroporphyrinogen decarboxylase activity"/>
    <property type="evidence" value="ECO:0000250"/>
    <property type="project" value="dictyBase"/>
</dbReference>
<dbReference type="GO" id="GO:0006783">
    <property type="term" value="P:heme biosynthetic process"/>
    <property type="evidence" value="ECO:0000250"/>
    <property type="project" value="dictyBase"/>
</dbReference>
<dbReference type="GO" id="GO:0006782">
    <property type="term" value="P:protoporphyrinogen IX biosynthetic process"/>
    <property type="evidence" value="ECO:0007669"/>
    <property type="project" value="UniProtKB-UniPathway"/>
</dbReference>
<dbReference type="CDD" id="cd00717">
    <property type="entry name" value="URO-D"/>
    <property type="match status" value="1"/>
</dbReference>
<dbReference type="FunFam" id="3.20.20.210:FF:000001">
    <property type="entry name" value="Uroporphyrinogen decarboxylase"/>
    <property type="match status" value="1"/>
</dbReference>
<dbReference type="Gene3D" id="3.20.20.210">
    <property type="match status" value="1"/>
</dbReference>
<dbReference type="HAMAP" id="MF_00218">
    <property type="entry name" value="URO_D"/>
    <property type="match status" value="1"/>
</dbReference>
<dbReference type="InterPro" id="IPR038071">
    <property type="entry name" value="UROD/MetE-like_sf"/>
</dbReference>
<dbReference type="InterPro" id="IPR006361">
    <property type="entry name" value="Uroporphyrinogen_deCO2ase_HemE"/>
</dbReference>
<dbReference type="InterPro" id="IPR000257">
    <property type="entry name" value="Uroporphyrinogen_deCOase"/>
</dbReference>
<dbReference type="NCBIfam" id="TIGR01464">
    <property type="entry name" value="hemE"/>
    <property type="match status" value="1"/>
</dbReference>
<dbReference type="PANTHER" id="PTHR21091">
    <property type="entry name" value="METHYLTETRAHYDROFOLATE:HOMOCYSTEINE METHYLTRANSFERASE RELATED"/>
    <property type="match status" value="1"/>
</dbReference>
<dbReference type="PANTHER" id="PTHR21091:SF169">
    <property type="entry name" value="UROPORPHYRINOGEN DECARBOXYLASE"/>
    <property type="match status" value="1"/>
</dbReference>
<dbReference type="Pfam" id="PF01208">
    <property type="entry name" value="URO-D"/>
    <property type="match status" value="1"/>
</dbReference>
<dbReference type="SUPFAM" id="SSF51726">
    <property type="entry name" value="UROD/MetE-like"/>
    <property type="match status" value="1"/>
</dbReference>
<dbReference type="PROSITE" id="PS00906">
    <property type="entry name" value="UROD_1"/>
    <property type="match status" value="1"/>
</dbReference>
<dbReference type="PROSITE" id="PS00907">
    <property type="entry name" value="UROD_2"/>
    <property type="match status" value="1"/>
</dbReference>
<gene>
    <name type="primary">hemE</name>
    <name type="synonym">urod</name>
    <name type="ORF">DDB_G0292294</name>
</gene>